<evidence type="ECO:0000255" key="1">
    <source>
        <dbReference type="HAMAP-Rule" id="MF_00048"/>
    </source>
</evidence>
<name>Y758_ACET2</name>
<comment type="similarity">
    <text evidence="1">Belongs to the UPF0102 family.</text>
</comment>
<reference key="1">
    <citation type="submission" date="2007-02" db="EMBL/GenBank/DDBJ databases">
        <title>Complete sequence of Clostridium thermocellum ATCC 27405.</title>
        <authorList>
            <consortium name="US DOE Joint Genome Institute"/>
            <person name="Copeland A."/>
            <person name="Lucas S."/>
            <person name="Lapidus A."/>
            <person name="Barry K."/>
            <person name="Detter J.C."/>
            <person name="Glavina del Rio T."/>
            <person name="Hammon N."/>
            <person name="Israni S."/>
            <person name="Dalin E."/>
            <person name="Tice H."/>
            <person name="Pitluck S."/>
            <person name="Chertkov O."/>
            <person name="Brettin T."/>
            <person name="Bruce D."/>
            <person name="Han C."/>
            <person name="Tapia R."/>
            <person name="Gilna P."/>
            <person name="Schmutz J."/>
            <person name="Larimer F."/>
            <person name="Land M."/>
            <person name="Hauser L."/>
            <person name="Kyrpides N."/>
            <person name="Mikhailova N."/>
            <person name="Wu J.H.D."/>
            <person name="Newcomb M."/>
            <person name="Richardson P."/>
        </authorList>
    </citation>
    <scope>NUCLEOTIDE SEQUENCE [LARGE SCALE GENOMIC DNA]</scope>
    <source>
        <strain>ATCC 27405 / DSM 1237 / JCM 9322 / NBRC 103400 / NCIMB 10682 / NRRL B-4536 / VPI 7372</strain>
    </source>
</reference>
<protein>
    <recommendedName>
        <fullName evidence="1">UPF0102 protein Cthe_0758</fullName>
    </recommendedName>
</protein>
<sequence length="130" mass="15155">MNSKVGNKNNKRAAGSIGEAAAVQFLKENNYEILETNFRYRRLGEIDIISREKDYICFVEVKARSSLGYGYPREAVNIRKQENIRRLAQIYLCKNRINDLKVRFDVVEVYMEKKGDDIEVKEISLIKNAF</sequence>
<accession>A3DDG4</accession>
<feature type="chain" id="PRO_0000336161" description="UPF0102 protein Cthe_0758">
    <location>
        <begin position="1"/>
        <end position="130"/>
    </location>
</feature>
<proteinExistence type="inferred from homology"/>
<gene>
    <name type="ordered locus">Cthe_0758</name>
</gene>
<keyword id="KW-1185">Reference proteome</keyword>
<organism>
    <name type="scientific">Acetivibrio thermocellus (strain ATCC 27405 / DSM 1237 / JCM 9322 / NBRC 103400 / NCIMB 10682 / NRRL B-4536 / VPI 7372)</name>
    <name type="common">Clostridium thermocellum</name>
    <dbReference type="NCBI Taxonomy" id="203119"/>
    <lineage>
        <taxon>Bacteria</taxon>
        <taxon>Bacillati</taxon>
        <taxon>Bacillota</taxon>
        <taxon>Clostridia</taxon>
        <taxon>Eubacteriales</taxon>
        <taxon>Oscillospiraceae</taxon>
        <taxon>Acetivibrio</taxon>
    </lineage>
</organism>
<dbReference type="EMBL" id="CP000568">
    <property type="protein sequence ID" value="ABN51993.1"/>
    <property type="molecule type" value="Genomic_DNA"/>
</dbReference>
<dbReference type="RefSeq" id="WP_003516301.1">
    <property type="nucleotide sequence ID" value="NC_009012.1"/>
</dbReference>
<dbReference type="SMR" id="A3DDG4"/>
<dbReference type="STRING" id="203119.Cthe_0758"/>
<dbReference type="GeneID" id="35805978"/>
<dbReference type="KEGG" id="cth:Cthe_0758"/>
<dbReference type="eggNOG" id="COG0792">
    <property type="taxonomic scope" value="Bacteria"/>
</dbReference>
<dbReference type="HOGENOM" id="CLU_115353_2_3_9"/>
<dbReference type="OrthoDB" id="9802516at2"/>
<dbReference type="Proteomes" id="UP000002145">
    <property type="component" value="Chromosome"/>
</dbReference>
<dbReference type="GO" id="GO:0003676">
    <property type="term" value="F:nucleic acid binding"/>
    <property type="evidence" value="ECO:0007669"/>
    <property type="project" value="InterPro"/>
</dbReference>
<dbReference type="CDD" id="cd20736">
    <property type="entry name" value="PoNe_Nuclease"/>
    <property type="match status" value="1"/>
</dbReference>
<dbReference type="Gene3D" id="3.40.1350.10">
    <property type="match status" value="1"/>
</dbReference>
<dbReference type="HAMAP" id="MF_00048">
    <property type="entry name" value="UPF0102"/>
    <property type="match status" value="1"/>
</dbReference>
<dbReference type="InterPro" id="IPR011335">
    <property type="entry name" value="Restrct_endonuc-II-like"/>
</dbReference>
<dbReference type="InterPro" id="IPR011856">
    <property type="entry name" value="tRNA_endonuc-like_dom_sf"/>
</dbReference>
<dbReference type="InterPro" id="IPR003509">
    <property type="entry name" value="UPF0102_YraN-like"/>
</dbReference>
<dbReference type="NCBIfam" id="NF009150">
    <property type="entry name" value="PRK12497.1-3"/>
    <property type="match status" value="1"/>
</dbReference>
<dbReference type="NCBIfam" id="NF009154">
    <property type="entry name" value="PRK12497.3-3"/>
    <property type="match status" value="1"/>
</dbReference>
<dbReference type="NCBIfam" id="TIGR00252">
    <property type="entry name" value="YraN family protein"/>
    <property type="match status" value="1"/>
</dbReference>
<dbReference type="PANTHER" id="PTHR34039">
    <property type="entry name" value="UPF0102 PROTEIN YRAN"/>
    <property type="match status" value="1"/>
</dbReference>
<dbReference type="PANTHER" id="PTHR34039:SF1">
    <property type="entry name" value="UPF0102 PROTEIN YRAN"/>
    <property type="match status" value="1"/>
</dbReference>
<dbReference type="Pfam" id="PF02021">
    <property type="entry name" value="UPF0102"/>
    <property type="match status" value="1"/>
</dbReference>
<dbReference type="SUPFAM" id="SSF52980">
    <property type="entry name" value="Restriction endonuclease-like"/>
    <property type="match status" value="1"/>
</dbReference>